<proteinExistence type="inferred from homology"/>
<reference key="1">
    <citation type="journal article" date="2011" name="J. Bacteriol.">
        <title>Comparative genomics of 28 Salmonella enterica isolates: evidence for CRISPR-mediated adaptive sublineage evolution.</title>
        <authorList>
            <person name="Fricke W.F."/>
            <person name="Mammel M.K."/>
            <person name="McDermott P.F."/>
            <person name="Tartera C."/>
            <person name="White D.G."/>
            <person name="Leclerc J.E."/>
            <person name="Ravel J."/>
            <person name="Cebula T.A."/>
        </authorList>
    </citation>
    <scope>NUCLEOTIDE SEQUENCE [LARGE SCALE GENOMIC DNA]</scope>
    <source>
        <strain>SL483</strain>
    </source>
</reference>
<sequence length="682" mass="72191">MSRKQLALFEPVLLVQALTDAVKKLSPRAQWRNPVMFVVWAGSVLTTLLTLAMVTGQIAGSALFTGIISLWLWFTVLFANFAEALAEGRSKAQANSLKGVKKTAFARRLRAPRHDAQADNVPAAELRKGDIVLVKAGDIIPCDGEVIEGGASVDESAITGESAPVIRESGGDFASVTGGTRILSDWLVIACSVNPGETFLDRMIAMVEGAQRRKTPNEIALTILLIALTIVFLLATATLWPFSAWGGNAVSVTVLVALLVCLIPTTIGGLLSAIGVAGMSRMLGANVIATSGRAVEAAGDVDVLLLDKTGTITLGNRQASDFIPARGVDERTLADAAQLASLADETPEGRSIVILAKQRFNLRERDVQSLHATFVPFTAQSRMSGINIDNRMIRKGSVDAIRRHVESNGGHFPADVEQNVENVARLGATPLVVVEGARVLGVITLKDIVKGGIKERFAQLRKMGIKTVMITGDNRLTAAAIAAEAGVDDFLAEATPEAKLALIRQYQAEGRLVAMTGDGTNDAPALAQADVAVAMNSGTQAAKEAGNMVDLDSNPTKLIEVVHIGKQMLMTRGSLTTFSIANDVAKYFAIIPAAFAATYPQLNALNVMGLHSPNSAILSAVIFNALIIIFLIPLALKGVSYKPLSASAMLRRNLWNYGLGGLVVPFIGIKVIDVLLTLLGLA</sequence>
<name>KDPB_SALA4</name>
<protein>
    <recommendedName>
        <fullName evidence="1">Potassium-transporting ATPase ATP-binding subunit</fullName>
        <ecNumber evidence="1">7.2.2.6</ecNumber>
    </recommendedName>
    <alternativeName>
        <fullName evidence="1">ATP phosphohydrolase [potassium-transporting] B chain</fullName>
    </alternativeName>
    <alternativeName>
        <fullName evidence="1">Potassium-binding and translocating subunit B</fullName>
    </alternativeName>
    <alternativeName>
        <fullName evidence="1">Potassium-translocating ATPase B chain</fullName>
    </alternativeName>
</protein>
<dbReference type="EC" id="7.2.2.6" evidence="1"/>
<dbReference type="EMBL" id="CP001138">
    <property type="protein sequence ID" value="ACH49206.1"/>
    <property type="molecule type" value="Genomic_DNA"/>
</dbReference>
<dbReference type="RefSeq" id="WP_000088030.1">
    <property type="nucleotide sequence ID" value="NC_011149.1"/>
</dbReference>
<dbReference type="SMR" id="B5EZE3"/>
<dbReference type="KEGG" id="sea:SeAg_B0753"/>
<dbReference type="HOGENOM" id="CLU_025728_2_0_6"/>
<dbReference type="Proteomes" id="UP000008819">
    <property type="component" value="Chromosome"/>
</dbReference>
<dbReference type="GO" id="GO:0005886">
    <property type="term" value="C:plasma membrane"/>
    <property type="evidence" value="ECO:0007669"/>
    <property type="project" value="UniProtKB-SubCell"/>
</dbReference>
<dbReference type="GO" id="GO:0005524">
    <property type="term" value="F:ATP binding"/>
    <property type="evidence" value="ECO:0007669"/>
    <property type="project" value="UniProtKB-UniRule"/>
</dbReference>
<dbReference type="GO" id="GO:0016887">
    <property type="term" value="F:ATP hydrolysis activity"/>
    <property type="evidence" value="ECO:0007669"/>
    <property type="project" value="InterPro"/>
</dbReference>
<dbReference type="GO" id="GO:0000287">
    <property type="term" value="F:magnesium ion binding"/>
    <property type="evidence" value="ECO:0007669"/>
    <property type="project" value="UniProtKB-UniRule"/>
</dbReference>
<dbReference type="GO" id="GO:0008556">
    <property type="term" value="F:P-type potassium transmembrane transporter activity"/>
    <property type="evidence" value="ECO:0007669"/>
    <property type="project" value="UniProtKB-UniRule"/>
</dbReference>
<dbReference type="CDD" id="cd02078">
    <property type="entry name" value="P-type_ATPase_K"/>
    <property type="match status" value="1"/>
</dbReference>
<dbReference type="FunFam" id="2.70.150.10:FF:000010">
    <property type="entry name" value="Potassium-transporting ATPase ATP-binding subunit"/>
    <property type="match status" value="1"/>
</dbReference>
<dbReference type="FunFam" id="3.40.1110.10:FF:000007">
    <property type="entry name" value="Potassium-transporting ATPase ATP-binding subunit"/>
    <property type="match status" value="1"/>
</dbReference>
<dbReference type="Gene3D" id="3.40.1110.10">
    <property type="entry name" value="Calcium-transporting ATPase, cytoplasmic domain N"/>
    <property type="match status" value="1"/>
</dbReference>
<dbReference type="Gene3D" id="2.70.150.10">
    <property type="entry name" value="Calcium-transporting ATPase, cytoplasmic transduction domain A"/>
    <property type="match status" value="1"/>
</dbReference>
<dbReference type="Gene3D" id="3.40.50.1000">
    <property type="entry name" value="HAD superfamily/HAD-like"/>
    <property type="match status" value="1"/>
</dbReference>
<dbReference type="HAMAP" id="MF_00285">
    <property type="entry name" value="KdpB"/>
    <property type="match status" value="1"/>
</dbReference>
<dbReference type="InterPro" id="IPR023299">
    <property type="entry name" value="ATPase_P-typ_cyto_dom_N"/>
</dbReference>
<dbReference type="InterPro" id="IPR018303">
    <property type="entry name" value="ATPase_P-typ_P_site"/>
</dbReference>
<dbReference type="InterPro" id="IPR023298">
    <property type="entry name" value="ATPase_P-typ_TM_dom_sf"/>
</dbReference>
<dbReference type="InterPro" id="IPR008250">
    <property type="entry name" value="ATPase_P-typ_transduc_dom_A_sf"/>
</dbReference>
<dbReference type="InterPro" id="IPR036412">
    <property type="entry name" value="HAD-like_sf"/>
</dbReference>
<dbReference type="InterPro" id="IPR023214">
    <property type="entry name" value="HAD_sf"/>
</dbReference>
<dbReference type="InterPro" id="IPR006391">
    <property type="entry name" value="P-type_ATPase_bsu_IA"/>
</dbReference>
<dbReference type="InterPro" id="IPR001757">
    <property type="entry name" value="P_typ_ATPase"/>
</dbReference>
<dbReference type="InterPro" id="IPR044492">
    <property type="entry name" value="P_typ_ATPase_HD_dom"/>
</dbReference>
<dbReference type="NCBIfam" id="TIGR01494">
    <property type="entry name" value="ATPase_P-type"/>
    <property type="match status" value="2"/>
</dbReference>
<dbReference type="NCBIfam" id="TIGR01497">
    <property type="entry name" value="kdpB"/>
    <property type="match status" value="1"/>
</dbReference>
<dbReference type="PANTHER" id="PTHR43743">
    <property type="entry name" value="POTASSIUM-TRANSPORTING ATPASE ATP-BINDING SUBUNIT"/>
    <property type="match status" value="1"/>
</dbReference>
<dbReference type="PANTHER" id="PTHR43743:SF1">
    <property type="entry name" value="POTASSIUM-TRANSPORTING ATPASE ATP-BINDING SUBUNIT"/>
    <property type="match status" value="1"/>
</dbReference>
<dbReference type="Pfam" id="PF00122">
    <property type="entry name" value="E1-E2_ATPase"/>
    <property type="match status" value="1"/>
</dbReference>
<dbReference type="Pfam" id="PF00702">
    <property type="entry name" value="Hydrolase"/>
    <property type="match status" value="1"/>
</dbReference>
<dbReference type="PRINTS" id="PR00119">
    <property type="entry name" value="CATATPASE"/>
</dbReference>
<dbReference type="SFLD" id="SFLDS00003">
    <property type="entry name" value="Haloacid_Dehalogenase"/>
    <property type="match status" value="1"/>
</dbReference>
<dbReference type="SFLD" id="SFLDF00027">
    <property type="entry name" value="p-type_atpase"/>
    <property type="match status" value="1"/>
</dbReference>
<dbReference type="SUPFAM" id="SSF81653">
    <property type="entry name" value="Calcium ATPase, transduction domain A"/>
    <property type="match status" value="1"/>
</dbReference>
<dbReference type="SUPFAM" id="SSF81665">
    <property type="entry name" value="Calcium ATPase, transmembrane domain M"/>
    <property type="match status" value="1"/>
</dbReference>
<dbReference type="SUPFAM" id="SSF56784">
    <property type="entry name" value="HAD-like"/>
    <property type="match status" value="1"/>
</dbReference>
<dbReference type="SUPFAM" id="SSF81660">
    <property type="entry name" value="Metal cation-transporting ATPase, ATP-binding domain N"/>
    <property type="match status" value="1"/>
</dbReference>
<dbReference type="PROSITE" id="PS00154">
    <property type="entry name" value="ATPASE_E1_E2"/>
    <property type="match status" value="1"/>
</dbReference>
<evidence type="ECO:0000255" key="1">
    <source>
        <dbReference type="HAMAP-Rule" id="MF_00285"/>
    </source>
</evidence>
<accession>B5EZE3</accession>
<organism>
    <name type="scientific">Salmonella agona (strain SL483)</name>
    <dbReference type="NCBI Taxonomy" id="454166"/>
    <lineage>
        <taxon>Bacteria</taxon>
        <taxon>Pseudomonadati</taxon>
        <taxon>Pseudomonadota</taxon>
        <taxon>Gammaproteobacteria</taxon>
        <taxon>Enterobacterales</taxon>
        <taxon>Enterobacteriaceae</taxon>
        <taxon>Salmonella</taxon>
    </lineage>
</organism>
<feature type="chain" id="PRO_1000114957" description="Potassium-transporting ATPase ATP-binding subunit">
    <location>
        <begin position="1"/>
        <end position="682"/>
    </location>
</feature>
<feature type="transmembrane region" description="Helical" evidence="1">
    <location>
        <begin position="34"/>
        <end position="54"/>
    </location>
</feature>
<feature type="transmembrane region" description="Helical" evidence="1">
    <location>
        <begin position="58"/>
        <end position="78"/>
    </location>
</feature>
<feature type="transmembrane region" description="Helical" evidence="1">
    <location>
        <begin position="219"/>
        <end position="239"/>
    </location>
</feature>
<feature type="transmembrane region" description="Helical" evidence="1">
    <location>
        <begin position="254"/>
        <end position="274"/>
    </location>
</feature>
<feature type="transmembrane region" description="Helical" evidence="1">
    <location>
        <begin position="588"/>
        <end position="608"/>
    </location>
</feature>
<feature type="transmembrane region" description="Helical" evidence="1">
    <location>
        <begin position="616"/>
        <end position="636"/>
    </location>
</feature>
<feature type="transmembrane region" description="Helical" evidence="1">
    <location>
        <begin position="662"/>
        <end position="682"/>
    </location>
</feature>
<feature type="active site" description="4-aspartylphosphate intermediate" evidence="1">
    <location>
        <position position="307"/>
    </location>
</feature>
<feature type="binding site" evidence="1">
    <location>
        <position position="344"/>
    </location>
    <ligand>
        <name>ATP</name>
        <dbReference type="ChEBI" id="CHEBI:30616"/>
    </ligand>
</feature>
<feature type="binding site" evidence="1">
    <location>
        <position position="348"/>
    </location>
    <ligand>
        <name>ATP</name>
        <dbReference type="ChEBI" id="CHEBI:30616"/>
    </ligand>
</feature>
<feature type="binding site" evidence="1">
    <location>
        <begin position="377"/>
        <end position="384"/>
    </location>
    <ligand>
        <name>ATP</name>
        <dbReference type="ChEBI" id="CHEBI:30616"/>
    </ligand>
</feature>
<feature type="binding site" evidence="1">
    <location>
        <position position="395"/>
    </location>
    <ligand>
        <name>ATP</name>
        <dbReference type="ChEBI" id="CHEBI:30616"/>
    </ligand>
</feature>
<feature type="binding site" evidence="1">
    <location>
        <position position="518"/>
    </location>
    <ligand>
        <name>Mg(2+)</name>
        <dbReference type="ChEBI" id="CHEBI:18420"/>
    </ligand>
</feature>
<feature type="binding site" evidence="1">
    <location>
        <position position="522"/>
    </location>
    <ligand>
        <name>Mg(2+)</name>
        <dbReference type="ChEBI" id="CHEBI:18420"/>
    </ligand>
</feature>
<keyword id="KW-0067">ATP-binding</keyword>
<keyword id="KW-0997">Cell inner membrane</keyword>
<keyword id="KW-1003">Cell membrane</keyword>
<keyword id="KW-0406">Ion transport</keyword>
<keyword id="KW-0460">Magnesium</keyword>
<keyword id="KW-0472">Membrane</keyword>
<keyword id="KW-0479">Metal-binding</keyword>
<keyword id="KW-0547">Nucleotide-binding</keyword>
<keyword id="KW-0597">Phosphoprotein</keyword>
<keyword id="KW-0630">Potassium</keyword>
<keyword id="KW-0633">Potassium transport</keyword>
<keyword id="KW-1278">Translocase</keyword>
<keyword id="KW-0812">Transmembrane</keyword>
<keyword id="KW-1133">Transmembrane helix</keyword>
<keyword id="KW-0813">Transport</keyword>
<gene>
    <name evidence="1" type="primary">kdpB</name>
    <name type="ordered locus">SeAg_B0753</name>
</gene>
<comment type="function">
    <text evidence="1">Part of the high-affinity ATP-driven potassium transport (or Kdp) system, which catalyzes the hydrolysis of ATP coupled with the electrogenic transport of potassium into the cytoplasm. This subunit is responsible for energy coupling to the transport system and for the release of the potassium ions to the cytoplasm.</text>
</comment>
<comment type="catalytic activity">
    <reaction evidence="1">
        <text>K(+)(out) + ATP + H2O = K(+)(in) + ADP + phosphate + H(+)</text>
        <dbReference type="Rhea" id="RHEA:16777"/>
        <dbReference type="ChEBI" id="CHEBI:15377"/>
        <dbReference type="ChEBI" id="CHEBI:15378"/>
        <dbReference type="ChEBI" id="CHEBI:29103"/>
        <dbReference type="ChEBI" id="CHEBI:30616"/>
        <dbReference type="ChEBI" id="CHEBI:43474"/>
        <dbReference type="ChEBI" id="CHEBI:456216"/>
        <dbReference type="EC" id="7.2.2.6"/>
    </reaction>
    <physiologicalReaction direction="left-to-right" evidence="1">
        <dbReference type="Rhea" id="RHEA:16778"/>
    </physiologicalReaction>
</comment>
<comment type="subunit">
    <text evidence="1">The system is composed of three essential subunits: KdpA, KdpB and KdpC.</text>
</comment>
<comment type="subcellular location">
    <subcellularLocation>
        <location evidence="1">Cell inner membrane</location>
        <topology evidence="1">Multi-pass membrane protein</topology>
    </subcellularLocation>
</comment>
<comment type="similarity">
    <text evidence="1">Belongs to the cation transport ATPase (P-type) (TC 3.A.3) family. Type IA subfamily.</text>
</comment>